<accession>Q54PT2</accession>
<reference key="1">
    <citation type="journal article" date="2005" name="Nature">
        <title>The genome of the social amoeba Dictyostelium discoideum.</title>
        <authorList>
            <person name="Eichinger L."/>
            <person name="Pachebat J.A."/>
            <person name="Gloeckner G."/>
            <person name="Rajandream M.A."/>
            <person name="Sucgang R."/>
            <person name="Berriman M."/>
            <person name="Song J."/>
            <person name="Olsen R."/>
            <person name="Szafranski K."/>
            <person name="Xu Q."/>
            <person name="Tunggal B."/>
            <person name="Kummerfeld S."/>
            <person name="Madera M."/>
            <person name="Konfortov B.A."/>
            <person name="Rivero F."/>
            <person name="Bankier A.T."/>
            <person name="Lehmann R."/>
            <person name="Hamlin N."/>
            <person name="Davies R."/>
            <person name="Gaudet P."/>
            <person name="Fey P."/>
            <person name="Pilcher K."/>
            <person name="Chen G."/>
            <person name="Saunders D."/>
            <person name="Sodergren E.J."/>
            <person name="Davis P."/>
            <person name="Kerhornou A."/>
            <person name="Nie X."/>
            <person name="Hall N."/>
            <person name="Anjard C."/>
            <person name="Hemphill L."/>
            <person name="Bason N."/>
            <person name="Farbrother P."/>
            <person name="Desany B."/>
            <person name="Just E."/>
            <person name="Morio T."/>
            <person name="Rost R."/>
            <person name="Churcher C.M."/>
            <person name="Cooper J."/>
            <person name="Haydock S."/>
            <person name="van Driessche N."/>
            <person name="Cronin A."/>
            <person name="Goodhead I."/>
            <person name="Muzny D.M."/>
            <person name="Mourier T."/>
            <person name="Pain A."/>
            <person name="Lu M."/>
            <person name="Harper D."/>
            <person name="Lindsay R."/>
            <person name="Hauser H."/>
            <person name="James K.D."/>
            <person name="Quiles M."/>
            <person name="Madan Babu M."/>
            <person name="Saito T."/>
            <person name="Buchrieser C."/>
            <person name="Wardroper A."/>
            <person name="Felder M."/>
            <person name="Thangavelu M."/>
            <person name="Johnson D."/>
            <person name="Knights A."/>
            <person name="Loulseged H."/>
            <person name="Mungall K.L."/>
            <person name="Oliver K."/>
            <person name="Price C."/>
            <person name="Quail M.A."/>
            <person name="Urushihara H."/>
            <person name="Hernandez J."/>
            <person name="Rabbinowitsch E."/>
            <person name="Steffen D."/>
            <person name="Sanders M."/>
            <person name="Ma J."/>
            <person name="Kohara Y."/>
            <person name="Sharp S."/>
            <person name="Simmonds M.N."/>
            <person name="Spiegler S."/>
            <person name="Tivey A."/>
            <person name="Sugano S."/>
            <person name="White B."/>
            <person name="Walker D."/>
            <person name="Woodward J.R."/>
            <person name="Winckler T."/>
            <person name="Tanaka Y."/>
            <person name="Shaulsky G."/>
            <person name="Schleicher M."/>
            <person name="Weinstock G.M."/>
            <person name="Rosenthal A."/>
            <person name="Cox E.C."/>
            <person name="Chisholm R.L."/>
            <person name="Gibbs R.A."/>
            <person name="Loomis W.F."/>
            <person name="Platzer M."/>
            <person name="Kay R.R."/>
            <person name="Williams J.G."/>
            <person name="Dear P.H."/>
            <person name="Noegel A.A."/>
            <person name="Barrell B.G."/>
            <person name="Kuspa A."/>
        </authorList>
    </citation>
    <scope>NUCLEOTIDE SEQUENCE [LARGE SCALE GENOMIC DNA]</scope>
    <source>
        <strain>AX4</strain>
    </source>
</reference>
<name>VPS4_DICDI</name>
<sequence length="444" mass="49605">MGDVNFLQKAIQIVQQATEQDNAKNYAEAHRLYIQSLEWFTTALKYEKSERSKATIKAKTLEYLQRAEQLKEYLDKSKNKKPVAVGGNKSNSAGSANGAGKSAKEDDEDMDPEDKKRNDSLSSSIVTTKPNVKWDDVAGLYQAKEYLKEAVIFPIKFPQMFTGNRKPWKGILLYGPPGTGKSYLAKAVATEISSTFFSISPSDIVTKWLGDSEKLVKQLFEMAREKNNSVIFIDEVDSLCSSRNDQESESARRIKTEFLIQMNGVGNDSDGILVLAATNIPWGLDLAIRRRFEKRIYIGLPEPQARAKMFQIHIGSTPNTLVQADYKKLADLTEGYSGSDIGSLVKDAIMQPVRAVQCATHFKQIRAPSREDPSVMTDYVTPCSPGDPLAQEMTWMDIDPTKLKEPEITIADCLKSLRVIKPSVNKADLDRYVEFTNDFGQDGV</sequence>
<protein>
    <recommendedName>
        <fullName>Vacuolar protein sorting-associated protein 4</fullName>
        <ecNumber>3.6.4.6</ecNumber>
    </recommendedName>
</protein>
<evidence type="ECO:0000250" key="1"/>
<evidence type="ECO:0000255" key="2"/>
<evidence type="ECO:0000256" key="3">
    <source>
        <dbReference type="SAM" id="MobiDB-lite"/>
    </source>
</evidence>
<evidence type="ECO:0000305" key="4"/>
<organism>
    <name type="scientific">Dictyostelium discoideum</name>
    <name type="common">Social amoeba</name>
    <dbReference type="NCBI Taxonomy" id="44689"/>
    <lineage>
        <taxon>Eukaryota</taxon>
        <taxon>Amoebozoa</taxon>
        <taxon>Evosea</taxon>
        <taxon>Eumycetozoa</taxon>
        <taxon>Dictyostelia</taxon>
        <taxon>Dictyosteliales</taxon>
        <taxon>Dictyosteliaceae</taxon>
        <taxon>Dictyostelium</taxon>
    </lineage>
</organism>
<keyword id="KW-0067">ATP-binding</keyword>
<keyword id="KW-0967">Endosome</keyword>
<keyword id="KW-0378">Hydrolase</keyword>
<keyword id="KW-0472">Membrane</keyword>
<keyword id="KW-0547">Nucleotide-binding</keyword>
<keyword id="KW-0653">Protein transport</keyword>
<keyword id="KW-1185">Reference proteome</keyword>
<keyword id="KW-0813">Transport</keyword>
<comment type="function">
    <text evidence="1">Involved in intracellular protein transport probably out of a prevacuolar endosomal compartment. May be involved in the release of components of the bilayered coat from the endosomal membrane. The association with ESCRT-III complex mediates the ATP-dependent disassembly of the ESCRT-III complex (By similarity).</text>
</comment>
<comment type="catalytic activity">
    <reaction>
        <text>ATP + H2O = ADP + phosphate + H(+)</text>
        <dbReference type="Rhea" id="RHEA:13065"/>
        <dbReference type="ChEBI" id="CHEBI:15377"/>
        <dbReference type="ChEBI" id="CHEBI:15378"/>
        <dbReference type="ChEBI" id="CHEBI:30616"/>
        <dbReference type="ChEBI" id="CHEBI:43474"/>
        <dbReference type="ChEBI" id="CHEBI:456216"/>
        <dbReference type="EC" id="3.6.4.6"/>
    </reaction>
</comment>
<comment type="subcellular location">
    <subcellularLocation>
        <location evidence="1">Prevacuolar compartment membrane</location>
        <topology evidence="1">Peripheral membrane protein</topology>
    </subcellularLocation>
    <subcellularLocation>
        <location evidence="1">Endosome membrane</location>
        <topology evidence="1">Peripheral membrane protein</topology>
    </subcellularLocation>
</comment>
<comment type="domain">
    <text evidence="1">The MIT domain may serve as an adapter for the ESCRT-III complex.</text>
</comment>
<comment type="similarity">
    <text evidence="4">Belongs to the AAA ATPase family.</text>
</comment>
<proteinExistence type="inferred from homology"/>
<gene>
    <name type="primary">vps4</name>
    <name type="ORF">DDB_G0284347</name>
</gene>
<feature type="chain" id="PRO_0000331380" description="Vacuolar protein sorting-associated protein 4">
    <location>
        <begin position="1"/>
        <end position="444"/>
    </location>
</feature>
<feature type="domain" description="MIT">
    <location>
        <begin position="2"/>
        <end position="80"/>
    </location>
</feature>
<feature type="region of interest" description="Disordered" evidence="3">
    <location>
        <begin position="79"/>
        <end position="122"/>
    </location>
</feature>
<feature type="compositionally biased region" description="Low complexity" evidence="3">
    <location>
        <begin position="86"/>
        <end position="101"/>
    </location>
</feature>
<feature type="binding site" evidence="2">
    <location>
        <begin position="175"/>
        <end position="182"/>
    </location>
    <ligand>
        <name>ATP</name>
        <dbReference type="ChEBI" id="CHEBI:30616"/>
    </ligand>
</feature>
<dbReference type="EC" id="3.6.4.6"/>
<dbReference type="EMBL" id="AAFI02000064">
    <property type="protein sequence ID" value="EAL65222.1"/>
    <property type="molecule type" value="Genomic_DNA"/>
</dbReference>
<dbReference type="RefSeq" id="XP_638572.1">
    <property type="nucleotide sequence ID" value="XM_633480.1"/>
</dbReference>
<dbReference type="SMR" id="Q54PT2"/>
<dbReference type="FunCoup" id="Q54PT2">
    <property type="interactions" value="894"/>
</dbReference>
<dbReference type="STRING" id="44689.Q54PT2"/>
<dbReference type="PaxDb" id="44689-DDB0234037"/>
<dbReference type="ABCD" id="Q54PT2">
    <property type="antibodies" value="5 sequenced antibodies"/>
</dbReference>
<dbReference type="EnsemblProtists" id="EAL65222">
    <property type="protein sequence ID" value="EAL65222"/>
    <property type="gene ID" value="DDB_G0284347"/>
</dbReference>
<dbReference type="GeneID" id="8624544"/>
<dbReference type="KEGG" id="ddi:DDB_G0284347"/>
<dbReference type="dictyBase" id="DDB_G0284347">
    <property type="gene designation" value="vps4"/>
</dbReference>
<dbReference type="VEuPathDB" id="AmoebaDB:DDB_G0284347"/>
<dbReference type="eggNOG" id="KOG0739">
    <property type="taxonomic scope" value="Eukaryota"/>
</dbReference>
<dbReference type="HOGENOM" id="CLU_000688_21_2_1"/>
<dbReference type="InParanoid" id="Q54PT2"/>
<dbReference type="OMA" id="IEWTNEF"/>
<dbReference type="PhylomeDB" id="Q54PT2"/>
<dbReference type="Reactome" id="R-DDI-917729">
    <property type="pathway name" value="Endosomal Sorting Complex Required For Transport (ESCRT)"/>
</dbReference>
<dbReference type="Reactome" id="R-DDI-9668328">
    <property type="pathway name" value="Sealing of the nuclear envelope (NE) by ESCRT-III"/>
</dbReference>
<dbReference type="PRO" id="PR:Q54PT2"/>
<dbReference type="Proteomes" id="UP000002195">
    <property type="component" value="Chromosome 4"/>
</dbReference>
<dbReference type="GO" id="GO:0036019">
    <property type="term" value="C:endolysosome"/>
    <property type="evidence" value="ECO:0000314"/>
    <property type="project" value="dictyBase"/>
</dbReference>
<dbReference type="GO" id="GO:0005768">
    <property type="term" value="C:endosome"/>
    <property type="evidence" value="ECO:0000250"/>
    <property type="project" value="dictyBase"/>
</dbReference>
<dbReference type="GO" id="GO:0010008">
    <property type="term" value="C:endosome membrane"/>
    <property type="evidence" value="ECO:0007669"/>
    <property type="project" value="UniProtKB-SubCell"/>
</dbReference>
<dbReference type="GO" id="GO:0140220">
    <property type="term" value="C:pathogen-containing vacuole"/>
    <property type="evidence" value="ECO:0000314"/>
    <property type="project" value="dictyBase"/>
</dbReference>
<dbReference type="GO" id="GO:0005886">
    <property type="term" value="C:plasma membrane"/>
    <property type="evidence" value="ECO:0000314"/>
    <property type="project" value="dictyBase"/>
</dbReference>
<dbReference type="GO" id="GO:0005524">
    <property type="term" value="F:ATP binding"/>
    <property type="evidence" value="ECO:0007669"/>
    <property type="project" value="UniProtKB-KW"/>
</dbReference>
<dbReference type="GO" id="GO:0016887">
    <property type="term" value="F:ATP hydrolysis activity"/>
    <property type="evidence" value="ECO:0000318"/>
    <property type="project" value="GO_Central"/>
</dbReference>
<dbReference type="GO" id="GO:0016197">
    <property type="term" value="P:endosomal transport"/>
    <property type="evidence" value="ECO:0000250"/>
    <property type="project" value="dictyBase"/>
</dbReference>
<dbReference type="GO" id="GO:0015031">
    <property type="term" value="P:protein transport"/>
    <property type="evidence" value="ECO:0007669"/>
    <property type="project" value="UniProtKB-KW"/>
</dbReference>
<dbReference type="GO" id="GO:0009617">
    <property type="term" value="P:response to bacterium"/>
    <property type="evidence" value="ECO:0007007"/>
    <property type="project" value="dictyBase"/>
</dbReference>
<dbReference type="GO" id="GO:0009611">
    <property type="term" value="P:response to wounding"/>
    <property type="evidence" value="ECO:0000314"/>
    <property type="project" value="dictyBase"/>
</dbReference>
<dbReference type="GO" id="GO:0007033">
    <property type="term" value="P:vacuole organization"/>
    <property type="evidence" value="ECO:0000318"/>
    <property type="project" value="GO_Central"/>
</dbReference>
<dbReference type="CDD" id="cd02678">
    <property type="entry name" value="MIT_VPS4"/>
    <property type="match status" value="1"/>
</dbReference>
<dbReference type="CDD" id="cd19521">
    <property type="entry name" value="RecA-like_VPS4"/>
    <property type="match status" value="1"/>
</dbReference>
<dbReference type="FunFam" id="1.20.58.80:FF:000004">
    <property type="entry name" value="Vacuolar protein sorting-associated protein 4"/>
    <property type="match status" value="1"/>
</dbReference>
<dbReference type="FunFam" id="3.40.50.300:FF:000043">
    <property type="entry name" value="Vacuolar protein sorting-associated protein 4"/>
    <property type="match status" value="1"/>
</dbReference>
<dbReference type="FunFam" id="1.10.8.60:FF:000015">
    <property type="entry name" value="vacuolar protein sorting-associated protein 4A"/>
    <property type="match status" value="1"/>
</dbReference>
<dbReference type="Gene3D" id="1.10.8.60">
    <property type="match status" value="1"/>
</dbReference>
<dbReference type="Gene3D" id="3.40.50.300">
    <property type="entry name" value="P-loop containing nucleotide triphosphate hydrolases"/>
    <property type="match status" value="1"/>
</dbReference>
<dbReference type="Gene3D" id="1.20.58.80">
    <property type="entry name" value="Phosphotransferase system, lactose/cellobiose-type IIA subunit"/>
    <property type="match status" value="1"/>
</dbReference>
<dbReference type="InterPro" id="IPR003593">
    <property type="entry name" value="AAA+_ATPase"/>
</dbReference>
<dbReference type="InterPro" id="IPR041569">
    <property type="entry name" value="AAA_lid_3"/>
</dbReference>
<dbReference type="InterPro" id="IPR003959">
    <property type="entry name" value="ATPase_AAA_core"/>
</dbReference>
<dbReference type="InterPro" id="IPR003960">
    <property type="entry name" value="ATPase_AAA_CS"/>
</dbReference>
<dbReference type="InterPro" id="IPR007330">
    <property type="entry name" value="MIT_dom"/>
</dbReference>
<dbReference type="InterPro" id="IPR036181">
    <property type="entry name" value="MIT_dom_sf"/>
</dbReference>
<dbReference type="InterPro" id="IPR050304">
    <property type="entry name" value="MT-severing_AAA_ATPase"/>
</dbReference>
<dbReference type="InterPro" id="IPR027417">
    <property type="entry name" value="P-loop_NTPase"/>
</dbReference>
<dbReference type="InterPro" id="IPR015415">
    <property type="entry name" value="Spast_Vps4_C"/>
</dbReference>
<dbReference type="InterPro" id="IPR045253">
    <property type="entry name" value="VPS4_MIT"/>
</dbReference>
<dbReference type="PANTHER" id="PTHR23074">
    <property type="entry name" value="AAA DOMAIN-CONTAINING"/>
    <property type="match status" value="1"/>
</dbReference>
<dbReference type="PANTHER" id="PTHR23074:SF83">
    <property type="entry name" value="VACUOLAR PROTEIN SORTING-ASSOCIATED PROTEIN 4A"/>
    <property type="match status" value="1"/>
</dbReference>
<dbReference type="Pfam" id="PF00004">
    <property type="entry name" value="AAA"/>
    <property type="match status" value="1"/>
</dbReference>
<dbReference type="Pfam" id="PF17862">
    <property type="entry name" value="AAA_lid_3"/>
    <property type="match status" value="1"/>
</dbReference>
<dbReference type="Pfam" id="PF04212">
    <property type="entry name" value="MIT"/>
    <property type="match status" value="1"/>
</dbReference>
<dbReference type="Pfam" id="PF09336">
    <property type="entry name" value="Vps4_C"/>
    <property type="match status" value="1"/>
</dbReference>
<dbReference type="SMART" id="SM00382">
    <property type="entry name" value="AAA"/>
    <property type="match status" value="1"/>
</dbReference>
<dbReference type="SMART" id="SM00745">
    <property type="entry name" value="MIT"/>
    <property type="match status" value="1"/>
</dbReference>
<dbReference type="SUPFAM" id="SSF116846">
    <property type="entry name" value="MIT domain"/>
    <property type="match status" value="1"/>
</dbReference>
<dbReference type="SUPFAM" id="SSF52540">
    <property type="entry name" value="P-loop containing nucleoside triphosphate hydrolases"/>
    <property type="match status" value="1"/>
</dbReference>
<dbReference type="PROSITE" id="PS00674">
    <property type="entry name" value="AAA"/>
    <property type="match status" value="1"/>
</dbReference>